<evidence type="ECO:0000255" key="1">
    <source>
        <dbReference type="HAMAP-Rule" id="MF_02112"/>
    </source>
</evidence>
<reference key="1">
    <citation type="submission" date="2010-01" db="EMBL/GenBank/DDBJ databases">
        <title>The complete genome of Geodermatophilus obscurus DSM 43160.</title>
        <authorList>
            <consortium name="US DOE Joint Genome Institute (JGI-PGF)"/>
            <person name="Lucas S."/>
            <person name="Copeland A."/>
            <person name="Lapidus A."/>
            <person name="Glavina del Rio T."/>
            <person name="Dalin E."/>
            <person name="Tice H."/>
            <person name="Bruce D."/>
            <person name="Goodwin L."/>
            <person name="Pitluck S."/>
            <person name="Kyrpides N."/>
            <person name="Mavromatis K."/>
            <person name="Ivanova N."/>
            <person name="Munk A.C."/>
            <person name="Brettin T."/>
            <person name="Detter J.C."/>
            <person name="Han C."/>
            <person name="Larimer F."/>
            <person name="Land M."/>
            <person name="Hauser L."/>
            <person name="Markowitz V."/>
            <person name="Cheng J.-F."/>
            <person name="Hugenholtz P."/>
            <person name="Woyke T."/>
            <person name="Wu D."/>
            <person name="Jando M."/>
            <person name="Schneider S."/>
            <person name="Klenk H.-P."/>
            <person name="Eisen J.A."/>
        </authorList>
    </citation>
    <scope>NUCLEOTIDE SEQUENCE [LARGE SCALE GENOMIC DNA]</scope>
    <source>
        <strain>ATCC 25078 / DSM 43160 / JCM 3152 / CCUG 61914 / KCC A-0152 / KCTC 9177 / NBRC 13315 / NRRL B-3577 / G-20</strain>
    </source>
</reference>
<sequence length="593" mass="65753">MGPGLGNGPDEFRARRERDVTALLSQISYLEEEIGLLRRKVAESPRQLRLLEERLAEAEGRAAFLSERNDKLAGTLRDARDQLVTLKEEVDRLGQPPSGYGVFLTRHDDGTVDVFTGGRKLRVSVSPAVEVDVLQHGQEVMLNEAMNVVEACGFERAGDVVMLKELLEPVEGEAPRALVIGHTDEERVVHLAESLTDQPLRSGDSLLLETRSGYVYERIPKSEVEELVLEEVPDIDYGDIGGLSRQIEQIRDAVELPFLHADLFREYELRPPKGILLYGPPGCGKTLIAKAVANSLAKKVSAVKGEGQAKSYFLNIKGPELLNKYVGETERHIRLVFQRAREKAGEGTPVIVFFDEMDSIFRTRGSGVSSDVESTIVPQLLSEIDGVEGLENVIVIGASNREDMIDPAILRPGRLDVKIKIERPDAEAARDIFSKYLTTTLPLHPDDLAEHGNSREATVGGMIQRTVERMYTESEENRFLEVTYANGDKEVLYFKDFNSGAMLQNIVDRAKKMAIKERLETGAGGLRVGHLMQACVDEFKENEDLPNTTNPDDWARISGKKGERIVYIRTLISGKGAESGRAIDTATNTGQYL</sequence>
<organism>
    <name type="scientific">Geodermatophilus obscurus (strain ATCC 25078 / DSM 43160 / JCM 3152 / CCUG 61914 / KCC A-0152 / KCTC 9177 / NBRC 13315 / NRRL B-3577 / G-20)</name>
    <dbReference type="NCBI Taxonomy" id="526225"/>
    <lineage>
        <taxon>Bacteria</taxon>
        <taxon>Bacillati</taxon>
        <taxon>Actinomycetota</taxon>
        <taxon>Actinomycetes</taxon>
        <taxon>Geodermatophilales</taxon>
        <taxon>Geodermatophilaceae</taxon>
        <taxon>Geodermatophilus</taxon>
    </lineage>
</organism>
<comment type="function">
    <text evidence="1">ATPase which is responsible for recognizing, binding, unfolding and translocation of pupylated proteins into the bacterial 20S proteasome core particle. May be essential for opening the gate of the 20S proteasome via an interaction with its C-terminus, thereby allowing substrate entry and access to the site of proteolysis. Thus, the C-termini of the proteasomal ATPase may function like a 'key in a lock' to induce gate opening and therefore regulate proteolysis.</text>
</comment>
<comment type="pathway">
    <text evidence="1">Protein degradation; proteasomal Pup-dependent pathway.</text>
</comment>
<comment type="subunit">
    <text evidence="1">Homohexamer. Assembles into a hexameric ring structure that caps the 20S proteasome core. Strongly interacts with the prokaryotic ubiquitin-like protein Pup through a hydrophobic interface; the interacting region of ARC lies in its N-terminal coiled-coil domain. There is one Pup binding site per ARC hexamer ring. Upon ATP-binding, the C-terminus of ARC interacts with the alpha-rings of the proteasome core, possibly by binding to the intersubunit pockets.</text>
</comment>
<comment type="domain">
    <text evidence="1">Consists of three main regions, an N-terminal coiled-coil domain that binds to protein Pup and functions as a docking station, an interdomain involved in ARC hexamerization, and a C-terminal ATPase domain of the AAA type.</text>
</comment>
<comment type="similarity">
    <text evidence="1">Belongs to the AAA ATPase family.</text>
</comment>
<proteinExistence type="inferred from homology"/>
<name>ARC_GEOOG</name>
<feature type="chain" id="PRO_0000396985" description="Proteasome-associated ATPase">
    <location>
        <begin position="1"/>
        <end position="593"/>
    </location>
</feature>
<feature type="region of interest" description="Docks into pockets in the proteasome alpha-ring" evidence="1">
    <location>
        <begin position="592"/>
        <end position="593"/>
    </location>
</feature>
<feature type="coiled-coil region" evidence="1">
    <location>
        <begin position="23"/>
        <end position="95"/>
    </location>
</feature>
<feature type="binding site" evidence="1">
    <location>
        <begin position="282"/>
        <end position="287"/>
    </location>
    <ligand>
        <name>ATP</name>
        <dbReference type="ChEBI" id="CHEBI:30616"/>
    </ligand>
</feature>
<gene>
    <name evidence="1" type="primary">arc</name>
    <name type="ordered locus">Gobs_2678</name>
</gene>
<accession>D2S6D9</accession>
<protein>
    <recommendedName>
        <fullName evidence="1">Proteasome-associated ATPase</fullName>
    </recommendedName>
    <alternativeName>
        <fullName evidence="1">AAA ATPase forming ring-shaped complexes</fullName>
        <shortName evidence="1">ARC</shortName>
    </alternativeName>
    <alternativeName>
        <fullName evidence="1">Proteasomal ATPase</fullName>
    </alternativeName>
</protein>
<dbReference type="EMBL" id="CP001867">
    <property type="protein sequence ID" value="ADB75313.1"/>
    <property type="molecule type" value="Genomic_DNA"/>
</dbReference>
<dbReference type="SMR" id="D2S6D9"/>
<dbReference type="STRING" id="526225.Gobs_2678"/>
<dbReference type="KEGG" id="gob:Gobs_2678"/>
<dbReference type="eggNOG" id="COG1222">
    <property type="taxonomic scope" value="Bacteria"/>
</dbReference>
<dbReference type="HOGENOM" id="CLU_036054_0_0_11"/>
<dbReference type="OrthoDB" id="9809379at2"/>
<dbReference type="UniPathway" id="UPA00997"/>
<dbReference type="Proteomes" id="UP000001382">
    <property type="component" value="Chromosome"/>
</dbReference>
<dbReference type="GO" id="GO:0000502">
    <property type="term" value="C:proteasome complex"/>
    <property type="evidence" value="ECO:0007669"/>
    <property type="project" value="UniProtKB-KW"/>
</dbReference>
<dbReference type="GO" id="GO:0005524">
    <property type="term" value="F:ATP binding"/>
    <property type="evidence" value="ECO:0007669"/>
    <property type="project" value="UniProtKB-UniRule"/>
</dbReference>
<dbReference type="GO" id="GO:0016887">
    <property type="term" value="F:ATP hydrolysis activity"/>
    <property type="evidence" value="ECO:0007669"/>
    <property type="project" value="UniProtKB-UniRule"/>
</dbReference>
<dbReference type="GO" id="GO:0019941">
    <property type="term" value="P:modification-dependent protein catabolic process"/>
    <property type="evidence" value="ECO:0007669"/>
    <property type="project" value="InterPro"/>
</dbReference>
<dbReference type="GO" id="GO:0010498">
    <property type="term" value="P:proteasomal protein catabolic process"/>
    <property type="evidence" value="ECO:0007669"/>
    <property type="project" value="InterPro"/>
</dbReference>
<dbReference type="FunFam" id="3.40.50.300:FF:000155">
    <property type="entry name" value="AAA ATPase forming ring-shaped complexes"/>
    <property type="match status" value="1"/>
</dbReference>
<dbReference type="Gene3D" id="1.10.8.60">
    <property type="match status" value="1"/>
</dbReference>
<dbReference type="Gene3D" id="1.20.5.170">
    <property type="match status" value="1"/>
</dbReference>
<dbReference type="Gene3D" id="2.40.50.140">
    <property type="entry name" value="Nucleic acid-binding proteins"/>
    <property type="match status" value="2"/>
</dbReference>
<dbReference type="Gene3D" id="3.40.50.300">
    <property type="entry name" value="P-loop containing nucleotide triphosphate hydrolases"/>
    <property type="match status" value="1"/>
</dbReference>
<dbReference type="HAMAP" id="MF_02112">
    <property type="entry name" value="ARC_ATPase"/>
    <property type="match status" value="1"/>
</dbReference>
<dbReference type="InterPro" id="IPR003593">
    <property type="entry name" value="AAA+_ATPase"/>
</dbReference>
<dbReference type="InterPro" id="IPR050168">
    <property type="entry name" value="AAA_ATPase_domain"/>
</dbReference>
<dbReference type="InterPro" id="IPR003959">
    <property type="entry name" value="ATPase_AAA_core"/>
</dbReference>
<dbReference type="InterPro" id="IPR003960">
    <property type="entry name" value="ATPase_AAA_CS"/>
</dbReference>
<dbReference type="InterPro" id="IPR012340">
    <property type="entry name" value="NA-bd_OB-fold"/>
</dbReference>
<dbReference type="InterPro" id="IPR027417">
    <property type="entry name" value="P-loop_NTPase"/>
</dbReference>
<dbReference type="InterPro" id="IPR032501">
    <property type="entry name" value="Prot_ATP_ID_OB_2nd"/>
</dbReference>
<dbReference type="InterPro" id="IPR041626">
    <property type="entry name" value="Prot_ATP_ID_OB_N"/>
</dbReference>
<dbReference type="InterPro" id="IPR022482">
    <property type="entry name" value="Proteasome_ATPase"/>
</dbReference>
<dbReference type="NCBIfam" id="TIGR03689">
    <property type="entry name" value="pup_AAA"/>
    <property type="match status" value="1"/>
</dbReference>
<dbReference type="PANTHER" id="PTHR23077">
    <property type="entry name" value="AAA-FAMILY ATPASE"/>
    <property type="match status" value="1"/>
</dbReference>
<dbReference type="PANTHER" id="PTHR23077:SF144">
    <property type="entry name" value="PROTEASOME-ASSOCIATED ATPASE"/>
    <property type="match status" value="1"/>
</dbReference>
<dbReference type="Pfam" id="PF00004">
    <property type="entry name" value="AAA"/>
    <property type="match status" value="1"/>
</dbReference>
<dbReference type="Pfam" id="PF16450">
    <property type="entry name" value="Prot_ATP_ID_OB_C"/>
    <property type="match status" value="1"/>
</dbReference>
<dbReference type="Pfam" id="PF17758">
    <property type="entry name" value="Prot_ATP_ID_OB_N"/>
    <property type="match status" value="1"/>
</dbReference>
<dbReference type="SMART" id="SM00382">
    <property type="entry name" value="AAA"/>
    <property type="match status" value="1"/>
</dbReference>
<dbReference type="SUPFAM" id="SSF52540">
    <property type="entry name" value="P-loop containing nucleoside triphosphate hydrolases"/>
    <property type="match status" value="1"/>
</dbReference>
<dbReference type="PROSITE" id="PS00674">
    <property type="entry name" value="AAA"/>
    <property type="match status" value="1"/>
</dbReference>
<keyword id="KW-0067">ATP-binding</keyword>
<keyword id="KW-0143">Chaperone</keyword>
<keyword id="KW-0175">Coiled coil</keyword>
<keyword id="KW-0547">Nucleotide-binding</keyword>
<keyword id="KW-0647">Proteasome</keyword>
<keyword id="KW-1185">Reference proteome</keyword>